<organism>
    <name type="scientific">Clostridium botulinum (strain 657 / Type Ba4)</name>
    <dbReference type="NCBI Taxonomy" id="515621"/>
    <lineage>
        <taxon>Bacteria</taxon>
        <taxon>Bacillati</taxon>
        <taxon>Bacillota</taxon>
        <taxon>Clostridia</taxon>
        <taxon>Eubacteriales</taxon>
        <taxon>Clostridiaceae</taxon>
        <taxon>Clostridium</taxon>
    </lineage>
</organism>
<comment type="function">
    <text evidence="1">Catalyzes the reversible conversion of 2-phosphoglycerate (2-PG) into phosphoenolpyruvate (PEP). It is essential for the degradation of carbohydrates via glycolysis.</text>
</comment>
<comment type="catalytic activity">
    <reaction evidence="1">
        <text>(2R)-2-phosphoglycerate = phosphoenolpyruvate + H2O</text>
        <dbReference type="Rhea" id="RHEA:10164"/>
        <dbReference type="ChEBI" id="CHEBI:15377"/>
        <dbReference type="ChEBI" id="CHEBI:58289"/>
        <dbReference type="ChEBI" id="CHEBI:58702"/>
        <dbReference type="EC" id="4.2.1.11"/>
    </reaction>
</comment>
<comment type="cofactor">
    <cofactor evidence="1">
        <name>Mg(2+)</name>
        <dbReference type="ChEBI" id="CHEBI:18420"/>
    </cofactor>
    <text evidence="1">Binds a second Mg(2+) ion via substrate during catalysis.</text>
</comment>
<comment type="pathway">
    <text evidence="1">Carbohydrate degradation; glycolysis; pyruvate from D-glyceraldehyde 3-phosphate: step 4/5.</text>
</comment>
<comment type="subcellular location">
    <subcellularLocation>
        <location evidence="1">Cytoplasm</location>
    </subcellularLocation>
    <subcellularLocation>
        <location evidence="1">Secreted</location>
    </subcellularLocation>
    <subcellularLocation>
        <location evidence="1">Cell surface</location>
    </subcellularLocation>
    <text evidence="1">Fractions of enolase are present in both the cytoplasm and on the cell surface.</text>
</comment>
<comment type="similarity">
    <text evidence="1">Belongs to the enolase family.</text>
</comment>
<dbReference type="EC" id="4.2.1.11" evidence="1"/>
<dbReference type="EMBL" id="CP001083">
    <property type="protein sequence ID" value="ACQ52169.1"/>
    <property type="molecule type" value="Genomic_DNA"/>
</dbReference>
<dbReference type="RefSeq" id="WP_003360473.1">
    <property type="nucleotide sequence ID" value="NC_012658.1"/>
</dbReference>
<dbReference type="SMR" id="C3KZ49"/>
<dbReference type="KEGG" id="cbi:CLJ_B0278"/>
<dbReference type="HOGENOM" id="CLU_031223_2_1_9"/>
<dbReference type="UniPathway" id="UPA00109">
    <property type="reaction ID" value="UER00187"/>
</dbReference>
<dbReference type="Proteomes" id="UP000002333">
    <property type="component" value="Chromosome"/>
</dbReference>
<dbReference type="GO" id="GO:0009986">
    <property type="term" value="C:cell surface"/>
    <property type="evidence" value="ECO:0007669"/>
    <property type="project" value="UniProtKB-SubCell"/>
</dbReference>
<dbReference type="GO" id="GO:0005576">
    <property type="term" value="C:extracellular region"/>
    <property type="evidence" value="ECO:0007669"/>
    <property type="project" value="UniProtKB-SubCell"/>
</dbReference>
<dbReference type="GO" id="GO:0000015">
    <property type="term" value="C:phosphopyruvate hydratase complex"/>
    <property type="evidence" value="ECO:0007669"/>
    <property type="project" value="InterPro"/>
</dbReference>
<dbReference type="GO" id="GO:0000287">
    <property type="term" value="F:magnesium ion binding"/>
    <property type="evidence" value="ECO:0007669"/>
    <property type="project" value="UniProtKB-UniRule"/>
</dbReference>
<dbReference type="GO" id="GO:0004634">
    <property type="term" value="F:phosphopyruvate hydratase activity"/>
    <property type="evidence" value="ECO:0007669"/>
    <property type="project" value="UniProtKB-UniRule"/>
</dbReference>
<dbReference type="GO" id="GO:0006096">
    <property type="term" value="P:glycolytic process"/>
    <property type="evidence" value="ECO:0007669"/>
    <property type="project" value="UniProtKB-UniRule"/>
</dbReference>
<dbReference type="CDD" id="cd03313">
    <property type="entry name" value="enolase"/>
    <property type="match status" value="1"/>
</dbReference>
<dbReference type="FunFam" id="3.20.20.120:FF:000001">
    <property type="entry name" value="Enolase"/>
    <property type="match status" value="1"/>
</dbReference>
<dbReference type="FunFam" id="3.30.390.10:FF:000001">
    <property type="entry name" value="Enolase"/>
    <property type="match status" value="1"/>
</dbReference>
<dbReference type="Gene3D" id="3.20.20.120">
    <property type="entry name" value="Enolase-like C-terminal domain"/>
    <property type="match status" value="1"/>
</dbReference>
<dbReference type="Gene3D" id="3.30.390.10">
    <property type="entry name" value="Enolase-like, N-terminal domain"/>
    <property type="match status" value="1"/>
</dbReference>
<dbReference type="HAMAP" id="MF_00318">
    <property type="entry name" value="Enolase"/>
    <property type="match status" value="1"/>
</dbReference>
<dbReference type="InterPro" id="IPR000941">
    <property type="entry name" value="Enolase"/>
</dbReference>
<dbReference type="InterPro" id="IPR036849">
    <property type="entry name" value="Enolase-like_C_sf"/>
</dbReference>
<dbReference type="InterPro" id="IPR029017">
    <property type="entry name" value="Enolase-like_N"/>
</dbReference>
<dbReference type="InterPro" id="IPR020810">
    <property type="entry name" value="Enolase_C"/>
</dbReference>
<dbReference type="InterPro" id="IPR020809">
    <property type="entry name" value="Enolase_CS"/>
</dbReference>
<dbReference type="InterPro" id="IPR020811">
    <property type="entry name" value="Enolase_N"/>
</dbReference>
<dbReference type="NCBIfam" id="TIGR01060">
    <property type="entry name" value="eno"/>
    <property type="match status" value="1"/>
</dbReference>
<dbReference type="PANTHER" id="PTHR11902">
    <property type="entry name" value="ENOLASE"/>
    <property type="match status" value="1"/>
</dbReference>
<dbReference type="PANTHER" id="PTHR11902:SF1">
    <property type="entry name" value="ENOLASE"/>
    <property type="match status" value="1"/>
</dbReference>
<dbReference type="Pfam" id="PF00113">
    <property type="entry name" value="Enolase_C"/>
    <property type="match status" value="1"/>
</dbReference>
<dbReference type="Pfam" id="PF03952">
    <property type="entry name" value="Enolase_N"/>
    <property type="match status" value="1"/>
</dbReference>
<dbReference type="PIRSF" id="PIRSF001400">
    <property type="entry name" value="Enolase"/>
    <property type="match status" value="1"/>
</dbReference>
<dbReference type="PRINTS" id="PR00148">
    <property type="entry name" value="ENOLASE"/>
</dbReference>
<dbReference type="SFLD" id="SFLDF00002">
    <property type="entry name" value="enolase"/>
    <property type="match status" value="1"/>
</dbReference>
<dbReference type="SFLD" id="SFLDG00178">
    <property type="entry name" value="enolase"/>
    <property type="match status" value="1"/>
</dbReference>
<dbReference type="SMART" id="SM01192">
    <property type="entry name" value="Enolase_C"/>
    <property type="match status" value="1"/>
</dbReference>
<dbReference type="SMART" id="SM01193">
    <property type="entry name" value="Enolase_N"/>
    <property type="match status" value="1"/>
</dbReference>
<dbReference type="SUPFAM" id="SSF51604">
    <property type="entry name" value="Enolase C-terminal domain-like"/>
    <property type="match status" value="1"/>
</dbReference>
<dbReference type="SUPFAM" id="SSF54826">
    <property type="entry name" value="Enolase N-terminal domain-like"/>
    <property type="match status" value="1"/>
</dbReference>
<dbReference type="PROSITE" id="PS00164">
    <property type="entry name" value="ENOLASE"/>
    <property type="match status" value="1"/>
</dbReference>
<accession>C3KZ49</accession>
<keyword id="KW-0963">Cytoplasm</keyword>
<keyword id="KW-0324">Glycolysis</keyword>
<keyword id="KW-0456">Lyase</keyword>
<keyword id="KW-0460">Magnesium</keyword>
<keyword id="KW-0479">Metal-binding</keyword>
<keyword id="KW-0964">Secreted</keyword>
<evidence type="ECO:0000255" key="1">
    <source>
        <dbReference type="HAMAP-Rule" id="MF_00318"/>
    </source>
</evidence>
<sequence length="431" mass="46507">MKNYIEIVDVYARQILDSRCNPTVEVEVELEDGTVGVAAVPSGASTGAFEAVELRDGDKSKYLGKGVLKAVDNVNTIIADELVGMNVLDQVAIDKTMIELDGTDNKAKLGANAMLGVSLACAKAAANFLGMSLYQYIGGVNAKVLPVPMMNIINGGKHADNNVDLQEFMIMPAGAPSFSEALRMCSEVYHALKSTLKSQGYDTGVGDEGGFAPNLKSNEEAIIVIIEAIKKAGYTPGKDIFIALDPASSEIFEDGKYNLAGEGRVLTPEEMANYYVELAEKYPIISIEDGMAEEDWDGWKILTEKIGKKVQLVGDDLFVTNTERLAKGIKLGVANSILIKLNQIGTLTETLNAIEMAERAGYTAVVSHRSGETEDTTIADLVVAVNAGQIKTGAPARSERVAKYNQLLRIEEELNDMGEYRGLKAFYNINK</sequence>
<reference key="1">
    <citation type="submission" date="2008-05" db="EMBL/GenBank/DDBJ databases">
        <title>Genome sequence of Clostridium botulinum Ba4 strain 657.</title>
        <authorList>
            <person name="Shrivastava S."/>
            <person name="Brown J.L."/>
            <person name="Bruce D."/>
            <person name="Detter C."/>
            <person name="Munk C."/>
            <person name="Smith L.A."/>
            <person name="Smith T.J."/>
            <person name="Sutton G."/>
            <person name="Brettin T.S."/>
        </authorList>
    </citation>
    <scope>NUCLEOTIDE SEQUENCE [LARGE SCALE GENOMIC DNA]</scope>
    <source>
        <strain>657 / Type Ba4</strain>
    </source>
</reference>
<protein>
    <recommendedName>
        <fullName evidence="1">Enolase</fullName>
        <ecNumber evidence="1">4.2.1.11</ecNumber>
    </recommendedName>
    <alternativeName>
        <fullName evidence="1">2-phospho-D-glycerate hydro-lyase</fullName>
    </alternativeName>
    <alternativeName>
        <fullName evidence="1">2-phosphoglycerate dehydratase</fullName>
    </alternativeName>
</protein>
<feature type="chain" id="PRO_1000205085" description="Enolase">
    <location>
        <begin position="1"/>
        <end position="431"/>
    </location>
</feature>
<feature type="active site" description="Proton donor" evidence="1">
    <location>
        <position position="208"/>
    </location>
</feature>
<feature type="active site" description="Proton acceptor" evidence="1">
    <location>
        <position position="340"/>
    </location>
</feature>
<feature type="binding site" evidence="1">
    <location>
        <position position="166"/>
    </location>
    <ligand>
        <name>(2R)-2-phosphoglycerate</name>
        <dbReference type="ChEBI" id="CHEBI:58289"/>
    </ligand>
</feature>
<feature type="binding site" evidence="1">
    <location>
        <position position="245"/>
    </location>
    <ligand>
        <name>Mg(2+)</name>
        <dbReference type="ChEBI" id="CHEBI:18420"/>
    </ligand>
</feature>
<feature type="binding site" evidence="1">
    <location>
        <position position="288"/>
    </location>
    <ligand>
        <name>Mg(2+)</name>
        <dbReference type="ChEBI" id="CHEBI:18420"/>
    </ligand>
</feature>
<feature type="binding site" evidence="1">
    <location>
        <position position="315"/>
    </location>
    <ligand>
        <name>Mg(2+)</name>
        <dbReference type="ChEBI" id="CHEBI:18420"/>
    </ligand>
</feature>
<feature type="binding site" evidence="1">
    <location>
        <position position="340"/>
    </location>
    <ligand>
        <name>(2R)-2-phosphoglycerate</name>
        <dbReference type="ChEBI" id="CHEBI:58289"/>
    </ligand>
</feature>
<feature type="binding site" evidence="1">
    <location>
        <position position="369"/>
    </location>
    <ligand>
        <name>(2R)-2-phosphoglycerate</name>
        <dbReference type="ChEBI" id="CHEBI:58289"/>
    </ligand>
</feature>
<feature type="binding site" evidence="1">
    <location>
        <position position="370"/>
    </location>
    <ligand>
        <name>(2R)-2-phosphoglycerate</name>
        <dbReference type="ChEBI" id="CHEBI:58289"/>
    </ligand>
</feature>
<feature type="binding site" evidence="1">
    <location>
        <position position="391"/>
    </location>
    <ligand>
        <name>(2R)-2-phosphoglycerate</name>
        <dbReference type="ChEBI" id="CHEBI:58289"/>
    </ligand>
</feature>
<proteinExistence type="inferred from homology"/>
<name>ENO_CLOB6</name>
<gene>
    <name evidence="1" type="primary">eno</name>
    <name type="ordered locus">CLJ_B0278</name>
</gene>